<name>ST3A1_RABIT</name>
<comment type="function">
    <text evidence="2">Sulfotransferase that utilizes 3'-phospho-5'-adenylyl sulfate (PAPS) as sulfonate donor to catalyze the N-sulfonation of amines (PTHP, aniline, 4-chloroaniline, 2-naphthylamine).</text>
</comment>
<comment type="catalytic activity">
    <reaction>
        <text>a primary amine + 3'-phosphoadenylyl sulfate = a sulfamate + adenosine 3',5'-bisphosphate + 2 H(+)</text>
        <dbReference type="Rhea" id="RHEA:24136"/>
        <dbReference type="ChEBI" id="CHEBI:15378"/>
        <dbReference type="ChEBI" id="CHEBI:58339"/>
        <dbReference type="ChEBI" id="CHEBI:58343"/>
        <dbReference type="ChEBI" id="CHEBI:65296"/>
        <dbReference type="ChEBI" id="CHEBI:131822"/>
        <dbReference type="EC" id="2.8.2.3"/>
    </reaction>
</comment>
<comment type="subcellular location">
    <subcellularLocation>
        <location evidence="2">Cytoplasm</location>
    </subcellularLocation>
</comment>
<comment type="tissue specificity">
    <text evidence="2">Expressed in male liver.</text>
</comment>
<comment type="similarity">
    <text evidence="3">Belongs to the sulfotransferase 1 family.</text>
</comment>
<sequence length="301" mass="35943">MDNSRKYLLNFKGCNFERTLVDMKILEKLDDFEIRDDDVFVITYPKSGTVWTQQILSLIYFEGHRNRTEKWDTLDRVPFLEYNIRKVDIENRPSPRLFASHLPYYLAPKSLKNNKAKIIYVYRNPKDVLISFFHFSNMVVKLEASNTLENFMEKFLDGKVVGSIWFDHIRGWYEHKNDFNILFMMYEDMKKDLRSSILKISSFLEKDLSEEEVDAIVRQATFENMKFIPQANYNNILSNEIGRRHNEGAFLRKGAVGDWKHHMTVEQSERFDRIFQEEMKDFPLKFIWDLNDEANSNHSAK</sequence>
<organism>
    <name type="scientific">Oryctolagus cuniculus</name>
    <name type="common">Rabbit</name>
    <dbReference type="NCBI Taxonomy" id="9986"/>
    <lineage>
        <taxon>Eukaryota</taxon>
        <taxon>Metazoa</taxon>
        <taxon>Chordata</taxon>
        <taxon>Craniata</taxon>
        <taxon>Vertebrata</taxon>
        <taxon>Euteleostomi</taxon>
        <taxon>Mammalia</taxon>
        <taxon>Eutheria</taxon>
        <taxon>Euarchontoglires</taxon>
        <taxon>Glires</taxon>
        <taxon>Lagomorpha</taxon>
        <taxon>Leporidae</taxon>
        <taxon>Oryctolagus</taxon>
    </lineage>
</organism>
<accession>O46640</accession>
<keyword id="KW-0963">Cytoplasm</keyword>
<keyword id="KW-0903">Direct protein sequencing</keyword>
<keyword id="KW-1185">Reference proteome</keyword>
<keyword id="KW-0808">Transferase</keyword>
<feature type="chain" id="PRO_0000085166" description="Amine sulfotransferase">
    <location>
        <begin position="1"/>
        <end position="301"/>
    </location>
</feature>
<feature type="active site" description="Proton acceptor" evidence="1">
    <location>
        <position position="101"/>
    </location>
</feature>
<feature type="binding site" evidence="1">
    <location>
        <begin position="46"/>
        <end position="51"/>
    </location>
    <ligand>
        <name>3'-phosphoadenylyl sulfate</name>
        <dbReference type="ChEBI" id="CHEBI:58339"/>
    </ligand>
</feature>
<feature type="binding site" evidence="1">
    <location>
        <position position="123"/>
    </location>
    <ligand>
        <name>3'-phosphoadenylyl sulfate</name>
        <dbReference type="ChEBI" id="CHEBI:58339"/>
    </ligand>
</feature>
<feature type="binding site" evidence="1">
    <location>
        <position position="131"/>
    </location>
    <ligand>
        <name>3'-phosphoadenylyl sulfate</name>
        <dbReference type="ChEBI" id="CHEBI:58339"/>
    </ligand>
</feature>
<feature type="binding site" evidence="1">
    <location>
        <position position="186"/>
    </location>
    <ligand>
        <name>3'-phosphoadenylyl sulfate</name>
        <dbReference type="ChEBI" id="CHEBI:58339"/>
    </ligand>
</feature>
<feature type="binding site" evidence="1">
    <location>
        <begin position="220"/>
        <end position="225"/>
    </location>
    <ligand>
        <name>3'-phosphoadenylyl sulfate</name>
        <dbReference type="ChEBI" id="CHEBI:58339"/>
    </ligand>
</feature>
<feature type="binding site" evidence="1">
    <location>
        <begin position="252"/>
        <end position="254"/>
    </location>
    <ligand>
        <name>3'-phosphoadenylyl sulfate</name>
        <dbReference type="ChEBI" id="CHEBI:58339"/>
    </ligand>
</feature>
<proteinExistence type="evidence at protein level"/>
<dbReference type="EC" id="2.8.2.3"/>
<dbReference type="EMBL" id="D86219">
    <property type="protein sequence ID" value="BAA24994.1"/>
    <property type="molecule type" value="mRNA"/>
</dbReference>
<dbReference type="PIR" id="JW0078">
    <property type="entry name" value="JW0078"/>
</dbReference>
<dbReference type="RefSeq" id="NP_001075679.1">
    <property type="nucleotide sequence ID" value="NM_001082210.2"/>
</dbReference>
<dbReference type="RefSeq" id="XP_008261520.3">
    <property type="nucleotide sequence ID" value="XM_008263298.4"/>
</dbReference>
<dbReference type="SMR" id="O46640"/>
<dbReference type="FunCoup" id="O46640">
    <property type="interactions" value="136"/>
</dbReference>
<dbReference type="STRING" id="9986.ENSOCUP00000022723"/>
<dbReference type="PaxDb" id="9986-ENSOCUP00000022723"/>
<dbReference type="GeneID" id="100009006"/>
<dbReference type="KEGG" id="ocu:100009006"/>
<dbReference type="CTD" id="57430"/>
<dbReference type="eggNOG" id="KOG1584">
    <property type="taxonomic scope" value="Eukaryota"/>
</dbReference>
<dbReference type="InParanoid" id="O46640"/>
<dbReference type="OrthoDB" id="205623at2759"/>
<dbReference type="BRENDA" id="2.8.2.3">
    <property type="organism ID" value="1749"/>
</dbReference>
<dbReference type="Proteomes" id="UP000001811">
    <property type="component" value="Unplaced"/>
</dbReference>
<dbReference type="GO" id="GO:0005737">
    <property type="term" value="C:cytoplasm"/>
    <property type="evidence" value="ECO:0007669"/>
    <property type="project" value="UniProtKB-SubCell"/>
</dbReference>
<dbReference type="GO" id="GO:0047685">
    <property type="term" value="F:amine sulfotransferase activity"/>
    <property type="evidence" value="ECO:0007669"/>
    <property type="project" value="UniProtKB-EC"/>
</dbReference>
<dbReference type="FunFam" id="3.40.50.300:FF:000433">
    <property type="entry name" value="Estrogen sulfotransferase"/>
    <property type="match status" value="1"/>
</dbReference>
<dbReference type="Gene3D" id="3.40.50.300">
    <property type="entry name" value="P-loop containing nucleotide triphosphate hydrolases"/>
    <property type="match status" value="1"/>
</dbReference>
<dbReference type="InterPro" id="IPR027417">
    <property type="entry name" value="P-loop_NTPase"/>
</dbReference>
<dbReference type="InterPro" id="IPR000863">
    <property type="entry name" value="Sulfotransferase_dom"/>
</dbReference>
<dbReference type="PANTHER" id="PTHR11783">
    <property type="entry name" value="SULFOTRANSFERASE SULT"/>
    <property type="match status" value="1"/>
</dbReference>
<dbReference type="Pfam" id="PF00685">
    <property type="entry name" value="Sulfotransfer_1"/>
    <property type="match status" value="1"/>
</dbReference>
<dbReference type="SUPFAM" id="SSF52540">
    <property type="entry name" value="P-loop containing nucleoside triphosphate hydrolases"/>
    <property type="match status" value="1"/>
</dbReference>
<evidence type="ECO:0000250" key="1"/>
<evidence type="ECO:0000269" key="2">
    <source>
    </source>
</evidence>
<evidence type="ECO:0000305" key="3"/>
<protein>
    <recommendedName>
        <fullName>Amine sulfotransferase</fullName>
        <ecNumber>2.8.2.3</ecNumber>
    </recommendedName>
    <alternativeName>
        <fullName>AST-RB1</fullName>
    </alternativeName>
    <alternativeName>
        <fullName>Sulfotransferase 3A1</fullName>
        <shortName>ST3A1</shortName>
    </alternativeName>
</protein>
<gene>
    <name type="primary">SULT3A1</name>
    <name type="synonym">ST3A1</name>
</gene>
<reference key="1">
    <citation type="journal article" date="1998" name="J. Biochem.">
        <title>Molecular cloning and expression of an amine sulfotransferase cDNA: a new gene family of cytosolic sulfotransferases in mammals.</title>
        <authorList>
            <person name="Yoshinari K."/>
            <person name="Nagata K."/>
            <person name="Ogino M."/>
            <person name="Fujita K."/>
            <person name="Shiraga T."/>
            <person name="Iwasaki K."/>
            <person name="Hata T."/>
            <person name="Yamazoe Y."/>
        </authorList>
    </citation>
    <scope>NUCLEOTIDE SEQUENCE [MRNA]</scope>
    <scope>PROTEIN SEQUENCE OF 29-66; 160-176; 200-206; 254-260 AND 286-301</scope>
    <scope>FUNCTION</scope>
    <scope>TISSUE SPECIFICITY</scope>
    <scope>SUBCELLULAR LOCATION</scope>
    <source>
        <strain>New Zealand white</strain>
        <tissue>Liver</tissue>
    </source>
</reference>